<comment type="function">
    <text evidence="2">TQO plays a role in sulfur oxidation and is proposed to couple sulfur oxidation to dioxygen reduction; caldariellaquinone or sulfolobus quinone seem to serve to transfer electrons to the electron transport chain terminal oxidase formed by DoxBCE.</text>
</comment>
<comment type="catalytic activity">
    <reaction evidence="2">
        <text>6-decylubiquinone + 2 thiosulfate = 6-decylubiquinol + tetrathionate</text>
        <dbReference type="Rhea" id="RHEA:10936"/>
        <dbReference type="ChEBI" id="CHEBI:15226"/>
        <dbReference type="ChEBI" id="CHEBI:33542"/>
        <dbReference type="ChEBI" id="CHEBI:52020"/>
        <dbReference type="ChEBI" id="CHEBI:52021"/>
        <dbReference type="EC" id="1.8.5.2"/>
    </reaction>
</comment>
<comment type="activity regulation">
    <text evidence="2">Inhibited by sulfite, metabisulfite and dithonite.</text>
</comment>
<comment type="biophysicochemical properties">
    <kinetics>
        <KM evidence="2">3.4 mM for thiosulfate (with ferrocyanide as electron acceptor)</KM>
        <KM evidence="2">5.87 mM for thiosulfate (with decylubiquinol as electron acceptor)</KM>
        <Vmax evidence="2">78.0 umol/min/mg enzyme with thiosulfate as substrate</Vmax>
        <text>KM values measured using the TQO doxDA complex.</text>
    </kinetics>
    <phDependence>
        <text evidence="2">Optimum pH is around 5, pH range of activity is different in tested buffers.</text>
    </phDependence>
    <temperatureDependence>
        <text evidence="2">Increasing activity in the range between 20 and 92 degrees Celsius.</text>
    </temperatureDependence>
</comment>
<comment type="subunit">
    <text evidence="2 3">Heterodimer of a large and a small subunit in a 2:2 stoichiometry (Probable). TQO may associate with the terminal oxidase formed by doxBCE.</text>
</comment>
<comment type="subcellular location">
    <subcellularLocation>
        <location evidence="2">Cell membrane</location>
        <topology evidence="2">Single-pass membrane protein</topology>
    </subcellularLocation>
</comment>
<comment type="PTM">
    <text>The N-terminus is blocked.</text>
</comment>
<comment type="PTM">
    <text evidence="2">Glycosylated.</text>
</comment>
<comment type="caution">
    <text evidence="4">The thiosulfate dehydrogenase [quinone] subunits have originally been described as components of the aa3-type terminal oxidase.</text>
</comment>
<accession>P97224</accession>
<proteinExistence type="evidence at protein level"/>
<organism>
    <name type="scientific">Acidianus ambivalens</name>
    <name type="common">Desulfurolobus ambivalens</name>
    <dbReference type="NCBI Taxonomy" id="2283"/>
    <lineage>
        <taxon>Archaea</taxon>
        <taxon>Thermoproteota</taxon>
        <taxon>Thermoprotei</taxon>
        <taxon>Sulfolobales</taxon>
        <taxon>Sulfolobaceae</taxon>
        <taxon>Acidianus</taxon>
    </lineage>
</organism>
<dbReference type="EC" id="1.8.5.2"/>
<dbReference type="EMBL" id="Y08730">
    <property type="protein sequence ID" value="CAA69987.1"/>
    <property type="molecule type" value="Genomic_DNA"/>
</dbReference>
<dbReference type="EMBL" id="Y09614">
    <property type="protein sequence ID" value="CAA70828.1"/>
    <property type="molecule type" value="Genomic_DNA"/>
</dbReference>
<dbReference type="RefSeq" id="WP_152941534.1">
    <property type="nucleotide sequence ID" value="NZ_CP045482.1"/>
</dbReference>
<dbReference type="TCDB" id="3.D.4.9.1">
    <property type="family name" value="the proton-translocating cytochrome oxidase (cox) superfamily"/>
</dbReference>
<dbReference type="GeneID" id="42779563"/>
<dbReference type="BioCyc" id="MetaCyc:MONOMER-12418"/>
<dbReference type="BRENDA" id="1.8.5.2">
    <property type="organism ID" value="86"/>
</dbReference>
<dbReference type="GO" id="GO:0016020">
    <property type="term" value="C:membrane"/>
    <property type="evidence" value="ECO:0000314"/>
    <property type="project" value="UniProtKB"/>
</dbReference>
<dbReference type="GO" id="GO:1990204">
    <property type="term" value="C:oxidoreductase complex"/>
    <property type="evidence" value="ECO:0000314"/>
    <property type="project" value="UniProtKB"/>
</dbReference>
<dbReference type="GO" id="GO:0005886">
    <property type="term" value="C:plasma membrane"/>
    <property type="evidence" value="ECO:0007669"/>
    <property type="project" value="UniProtKB-SubCell"/>
</dbReference>
<dbReference type="GO" id="GO:0048038">
    <property type="term" value="F:quinone binding"/>
    <property type="evidence" value="ECO:0007669"/>
    <property type="project" value="UniProtKB-KW"/>
</dbReference>
<dbReference type="GO" id="GO:0043831">
    <property type="term" value="F:thiosulfate dehydrogenase (quinone) activity"/>
    <property type="evidence" value="ECO:0007669"/>
    <property type="project" value="UniProtKB-EC"/>
</dbReference>
<dbReference type="InterPro" id="IPR011636">
    <property type="entry name" value="DoxA"/>
</dbReference>
<dbReference type="InterPro" id="IPR053673">
    <property type="entry name" value="TQO_small_subunit"/>
</dbReference>
<dbReference type="NCBIfam" id="NF041178">
    <property type="entry name" value="TQO_small_DoxA"/>
    <property type="match status" value="1"/>
</dbReference>
<dbReference type="Pfam" id="PF07680">
    <property type="entry name" value="DoxA"/>
    <property type="match status" value="1"/>
</dbReference>
<keyword id="KW-1003">Cell membrane</keyword>
<keyword id="KW-0249">Electron transport</keyword>
<keyword id="KW-0325">Glycoprotein</keyword>
<keyword id="KW-0472">Membrane</keyword>
<keyword id="KW-0560">Oxidoreductase</keyword>
<keyword id="KW-0874">Quinone</keyword>
<keyword id="KW-0679">Respiratory chain</keyword>
<keyword id="KW-0812">Transmembrane</keyword>
<keyword id="KW-1133">Transmembrane helix</keyword>
<keyword id="KW-0813">Transport</keyword>
<reference key="1">
    <citation type="journal article" date="1997" name="J. Bacteriol.">
        <title>The terminal quinol oxidase of the hyperthermophilic archaeon Acidianus ambivalens exhibits a novel subunit structure and gene organization.</title>
        <authorList>
            <person name="Purschke W.G."/>
            <person name="Schmidt C.L."/>
            <person name="Petersen A."/>
            <person name="Schafer G."/>
        </authorList>
    </citation>
    <scope>NUCLEOTIDE SEQUENCE [GENOMIC DNA]</scope>
    <source>
        <strain>Lei 10 / DSM 3772 / JCM 9191</strain>
    </source>
</reference>
<reference key="2">
    <citation type="journal article" date="2004" name="Mol. Microbiol.">
        <title>Coupling of the pathway of sulphur oxidation to dioxygen reduction: characterization of a novel membrane-bound thiosulphate:quinone oxidoreductase.</title>
        <authorList>
            <person name="Muller F.H."/>
            <person name="Bandeiras T.M."/>
            <person name="Urich T."/>
            <person name="Teixeira M."/>
            <person name="Gomes C.M."/>
            <person name="Kletzin A."/>
        </authorList>
    </citation>
    <scope>FUNCTION</scope>
    <scope>CATALYTIC ACTIVITY</scope>
    <scope>ACTIVITY REGULATION</scope>
    <scope>BIOPHYSICOCHEMICAL PROPERTIES</scope>
    <scope>SUBUNIT</scope>
    <scope>GLYCOSYLATION</scope>
    <scope>SUBCELLULAR LOCATION</scope>
</reference>
<sequence>MERVTIIGIIFAILVVGWILATGQWAYGNVVGPLVNHSKIPLLKITYVSAYENAKGTYLILNITDCCGPDAYPASAPIMEIYNSTWHVFLYSYNISNDTVKVIQAPWNENKKDYTNWYSGFVVILGSEAQFQLQLPFHLSPGTYHIKLYTPAVSSKVLAKQTATFTIS</sequence>
<gene>
    <name type="primary">doxA</name>
</gene>
<evidence type="ECO:0000255" key="1"/>
<evidence type="ECO:0000269" key="2">
    <source>
    </source>
</evidence>
<evidence type="ECO:0000305" key="3"/>
<evidence type="ECO:0000305" key="4">
    <source>
    </source>
</evidence>
<protein>
    <recommendedName>
        <fullName>Thiosulfate dehydrogenase [quinone] small subunit</fullName>
        <ecNumber>1.8.5.2</ecNumber>
    </recommendedName>
    <alternativeName>
        <fullName>Terminal oxidase subunit II</fullName>
    </alternativeName>
    <alternativeName>
        <fullName>Thiosulfate:quinone oxidoreductase</fullName>
        <shortName>TQO</shortName>
    </alternativeName>
</protein>
<name>DOXA_ACIAM</name>
<feature type="chain" id="PRO_0000418548" description="Thiosulfate dehydrogenase [quinone] small subunit">
    <location>
        <begin position="1"/>
        <end position="168"/>
    </location>
</feature>
<feature type="transmembrane region" description="Helical" evidence="1">
    <location>
        <begin position="6"/>
        <end position="26"/>
    </location>
</feature>